<feature type="chain" id="PRO_0000228692" description="Probable phosphatase YcdX">
    <location>
        <begin position="1"/>
        <end position="245"/>
    </location>
</feature>
<feature type="binding site" evidence="1">
    <location>
        <position position="7"/>
    </location>
    <ligand>
        <name>Zn(2+)</name>
        <dbReference type="ChEBI" id="CHEBI:29105"/>
        <label>1</label>
    </ligand>
</feature>
<feature type="binding site" evidence="1">
    <location>
        <position position="9"/>
    </location>
    <ligand>
        <name>Zn(2+)</name>
        <dbReference type="ChEBI" id="CHEBI:29105"/>
        <label>1</label>
    </ligand>
</feature>
<feature type="binding site" evidence="1">
    <location>
        <position position="15"/>
    </location>
    <ligand>
        <name>Zn(2+)</name>
        <dbReference type="ChEBI" id="CHEBI:29105"/>
        <label>2</label>
    </ligand>
</feature>
<feature type="binding site" evidence="1">
    <location>
        <position position="40"/>
    </location>
    <ligand>
        <name>Zn(2+)</name>
        <dbReference type="ChEBI" id="CHEBI:29105"/>
        <label>2</label>
    </ligand>
</feature>
<feature type="binding site" evidence="1">
    <location>
        <position position="73"/>
    </location>
    <ligand>
        <name>Zn(2+)</name>
        <dbReference type="ChEBI" id="CHEBI:29105"/>
        <label>1</label>
    </ligand>
</feature>
<feature type="binding site" evidence="1">
    <location>
        <position position="73"/>
    </location>
    <ligand>
        <name>Zn(2+)</name>
        <dbReference type="ChEBI" id="CHEBI:29105"/>
        <label>3</label>
    </ligand>
</feature>
<feature type="binding site" evidence="1">
    <location>
        <position position="101"/>
    </location>
    <ligand>
        <name>Zn(2+)</name>
        <dbReference type="ChEBI" id="CHEBI:29105"/>
        <label>3</label>
    </ligand>
</feature>
<feature type="binding site" evidence="1">
    <location>
        <position position="131"/>
    </location>
    <ligand>
        <name>Zn(2+)</name>
        <dbReference type="ChEBI" id="CHEBI:29105"/>
        <label>3</label>
    </ligand>
</feature>
<feature type="binding site" evidence="1">
    <location>
        <position position="192"/>
    </location>
    <ligand>
        <name>Zn(2+)</name>
        <dbReference type="ChEBI" id="CHEBI:29105"/>
        <label>1</label>
    </ligand>
</feature>
<feature type="binding site" evidence="1">
    <location>
        <position position="194"/>
    </location>
    <ligand>
        <name>Zn(2+)</name>
        <dbReference type="ChEBI" id="CHEBI:29105"/>
        <label>2</label>
    </ligand>
</feature>
<sequence length="245" mass="26832">MYPVDLHMHTVASTHAYSTLSDYIAQAKQKGIKLFAITDHGPDMEDAPHHWHFINMRIWPRVVDGVGILRGIEANIKNVDGEIDCSGKMFDSLDLIIAGFHEPVFAPHDKATNTQAMIATIASGNVHIISHPGNPKYEIDVKAVAEAAAKHQVALEINNSSFLHSRKGSEDNCRAVAAAVRDAGGWVALGSDSHTAFTMGEFEECLKILDAVDFPPERILNVSPRRLLNFLESRGMAPIAEFADL</sequence>
<organism>
    <name type="scientific">Escherichia coli O157:H7</name>
    <dbReference type="NCBI Taxonomy" id="83334"/>
    <lineage>
        <taxon>Bacteria</taxon>
        <taxon>Pseudomonadati</taxon>
        <taxon>Pseudomonadota</taxon>
        <taxon>Gammaproteobacteria</taxon>
        <taxon>Enterobacterales</taxon>
        <taxon>Enterobacteriaceae</taxon>
        <taxon>Escherichia</taxon>
    </lineage>
</organism>
<reference key="1">
    <citation type="journal article" date="2001" name="Nature">
        <title>Genome sequence of enterohaemorrhagic Escherichia coli O157:H7.</title>
        <authorList>
            <person name="Perna N.T."/>
            <person name="Plunkett G. III"/>
            <person name="Burland V."/>
            <person name="Mau B."/>
            <person name="Glasner J.D."/>
            <person name="Rose D.J."/>
            <person name="Mayhew G.F."/>
            <person name="Evans P.S."/>
            <person name="Gregor J."/>
            <person name="Kirkpatrick H.A."/>
            <person name="Posfai G."/>
            <person name="Hackett J."/>
            <person name="Klink S."/>
            <person name="Boutin A."/>
            <person name="Shao Y."/>
            <person name="Miller L."/>
            <person name="Grotbeck E.J."/>
            <person name="Davis N.W."/>
            <person name="Lim A."/>
            <person name="Dimalanta E.T."/>
            <person name="Potamousis K."/>
            <person name="Apodaca J."/>
            <person name="Anantharaman T.S."/>
            <person name="Lin J."/>
            <person name="Yen G."/>
            <person name="Schwartz D.C."/>
            <person name="Welch R.A."/>
            <person name="Blattner F.R."/>
        </authorList>
    </citation>
    <scope>NUCLEOTIDE SEQUENCE [LARGE SCALE GENOMIC DNA]</scope>
    <source>
        <strain>O157:H7 / EDL933 / ATCC 700927 / EHEC</strain>
    </source>
</reference>
<reference key="2">
    <citation type="journal article" date="2001" name="DNA Res.">
        <title>Complete genome sequence of enterohemorrhagic Escherichia coli O157:H7 and genomic comparison with a laboratory strain K-12.</title>
        <authorList>
            <person name="Hayashi T."/>
            <person name="Makino K."/>
            <person name="Ohnishi M."/>
            <person name="Kurokawa K."/>
            <person name="Ishii K."/>
            <person name="Yokoyama K."/>
            <person name="Han C.-G."/>
            <person name="Ohtsubo E."/>
            <person name="Nakayama K."/>
            <person name="Murata T."/>
            <person name="Tanaka M."/>
            <person name="Tobe T."/>
            <person name="Iida T."/>
            <person name="Takami H."/>
            <person name="Honda T."/>
            <person name="Sasakawa C."/>
            <person name="Ogasawara N."/>
            <person name="Yasunaga T."/>
            <person name="Kuhara S."/>
            <person name="Shiba T."/>
            <person name="Hattori M."/>
            <person name="Shinagawa H."/>
        </authorList>
    </citation>
    <scope>NUCLEOTIDE SEQUENCE [LARGE SCALE GENOMIC DNA]</scope>
    <source>
        <strain>O157:H7 / Sakai / RIMD 0509952 / EHEC</strain>
    </source>
</reference>
<dbReference type="EC" id="3.1.3.-" evidence="1"/>
<dbReference type="EMBL" id="AE005174">
    <property type="protein sequence ID" value="AAG55780.1"/>
    <property type="molecule type" value="Genomic_DNA"/>
</dbReference>
<dbReference type="EMBL" id="BA000007">
    <property type="protein sequence ID" value="BAB34834.1"/>
    <property type="molecule type" value="Genomic_DNA"/>
</dbReference>
<dbReference type="PIR" id="C90805">
    <property type="entry name" value="C90805"/>
</dbReference>
<dbReference type="PIR" id="H85664">
    <property type="entry name" value="H85664"/>
</dbReference>
<dbReference type="RefSeq" id="NP_309438.1">
    <property type="nucleotide sequence ID" value="NC_002695.1"/>
</dbReference>
<dbReference type="RefSeq" id="WP_000283664.1">
    <property type="nucleotide sequence ID" value="NZ_VOAI01000018.1"/>
</dbReference>
<dbReference type="SMR" id="Q8X9J6"/>
<dbReference type="STRING" id="155864.Z1667"/>
<dbReference type="GeneID" id="912538"/>
<dbReference type="GeneID" id="93776384"/>
<dbReference type="KEGG" id="ece:Z1667"/>
<dbReference type="KEGG" id="ecs:ECs_1411"/>
<dbReference type="PATRIC" id="fig|386585.9.peg.1510"/>
<dbReference type="eggNOG" id="COG1387">
    <property type="taxonomic scope" value="Bacteria"/>
</dbReference>
<dbReference type="HOGENOM" id="CLU_061999_0_1_6"/>
<dbReference type="OMA" id="SEPNCRA"/>
<dbReference type="Proteomes" id="UP000000558">
    <property type="component" value="Chromosome"/>
</dbReference>
<dbReference type="Proteomes" id="UP000002519">
    <property type="component" value="Chromosome"/>
</dbReference>
<dbReference type="GO" id="GO:0005829">
    <property type="term" value="C:cytosol"/>
    <property type="evidence" value="ECO:0007669"/>
    <property type="project" value="TreeGrafter"/>
</dbReference>
<dbReference type="GO" id="GO:0016791">
    <property type="term" value="F:phosphatase activity"/>
    <property type="evidence" value="ECO:0007669"/>
    <property type="project" value="UniProtKB-UniRule"/>
</dbReference>
<dbReference type="GO" id="GO:0008270">
    <property type="term" value="F:zinc ion binding"/>
    <property type="evidence" value="ECO:0007669"/>
    <property type="project" value="UniProtKB-UniRule"/>
</dbReference>
<dbReference type="GO" id="GO:0071978">
    <property type="term" value="P:bacterial-type flagellum-dependent swarming motility"/>
    <property type="evidence" value="ECO:0007669"/>
    <property type="project" value="TreeGrafter"/>
</dbReference>
<dbReference type="CDD" id="cd07437">
    <property type="entry name" value="PHP_HisPPase_Ycdx_like"/>
    <property type="match status" value="1"/>
</dbReference>
<dbReference type="FunFam" id="3.20.20.140:FF:000008">
    <property type="entry name" value="Probable phosphatase YcdX"/>
    <property type="match status" value="1"/>
</dbReference>
<dbReference type="Gene3D" id="3.20.20.140">
    <property type="entry name" value="Metal-dependent hydrolases"/>
    <property type="match status" value="1"/>
</dbReference>
<dbReference type="HAMAP" id="MF_01561">
    <property type="entry name" value="YcdX_phosphat"/>
    <property type="match status" value="1"/>
</dbReference>
<dbReference type="InterPro" id="IPR023710">
    <property type="entry name" value="Phosphatase_YcdX_put"/>
</dbReference>
<dbReference type="InterPro" id="IPR004013">
    <property type="entry name" value="PHP_dom"/>
</dbReference>
<dbReference type="InterPro" id="IPR050243">
    <property type="entry name" value="PHP_phosphatase"/>
</dbReference>
<dbReference type="InterPro" id="IPR003141">
    <property type="entry name" value="Pol/His_phosphatase_N"/>
</dbReference>
<dbReference type="InterPro" id="IPR016195">
    <property type="entry name" value="Pol/histidinol_Pase-like"/>
</dbReference>
<dbReference type="NCBIfam" id="NF006702">
    <property type="entry name" value="PRK09248.1"/>
    <property type="match status" value="1"/>
</dbReference>
<dbReference type="PANTHER" id="PTHR36928">
    <property type="entry name" value="PHOSPHATASE YCDX-RELATED"/>
    <property type="match status" value="1"/>
</dbReference>
<dbReference type="PANTHER" id="PTHR36928:SF1">
    <property type="entry name" value="PHOSPHATASE YCDX-RELATED"/>
    <property type="match status" value="1"/>
</dbReference>
<dbReference type="Pfam" id="PF02811">
    <property type="entry name" value="PHP"/>
    <property type="match status" value="1"/>
</dbReference>
<dbReference type="SMART" id="SM00481">
    <property type="entry name" value="POLIIIAc"/>
    <property type="match status" value="1"/>
</dbReference>
<dbReference type="SUPFAM" id="SSF89550">
    <property type="entry name" value="PHP domain-like"/>
    <property type="match status" value="1"/>
</dbReference>
<gene>
    <name evidence="1" type="primary">ycdX</name>
    <name type="ordered locus">Z1667</name>
    <name type="ordered locus">ECs1411</name>
</gene>
<keyword id="KW-0378">Hydrolase</keyword>
<keyword id="KW-0479">Metal-binding</keyword>
<keyword id="KW-1185">Reference proteome</keyword>
<keyword id="KW-0862">Zinc</keyword>
<comment type="cofactor">
    <cofactor evidence="1">
        <name>Zn(2+)</name>
        <dbReference type="ChEBI" id="CHEBI:29105"/>
    </cofactor>
    <text evidence="1">Binds 3 Zn(2+) ions per subunit.</text>
</comment>
<comment type="subunit">
    <text evidence="1">Homotrimer.</text>
</comment>
<comment type="similarity">
    <text evidence="1">Belongs to the PHP family.</text>
</comment>
<name>YCDX_ECO57</name>
<protein>
    <recommendedName>
        <fullName evidence="1">Probable phosphatase YcdX</fullName>
        <ecNumber evidence="1">3.1.3.-</ecNumber>
    </recommendedName>
</protein>
<accession>Q8X9J6</accession>
<accession>Q7AFB4</accession>
<proteinExistence type="inferred from homology"/>
<evidence type="ECO:0000255" key="1">
    <source>
        <dbReference type="HAMAP-Rule" id="MF_01561"/>
    </source>
</evidence>